<gene>
    <name evidence="1" type="primary">pafA</name>
    <name type="ordered locus">Bfae_16170</name>
</gene>
<organism>
    <name type="scientific">Brachybacterium faecium (strain ATCC 43885 / DSM 4810 / JCM 11609 / LMG 19847 / NBRC 14762 / NCIMB 9860 / 6-10)</name>
    <dbReference type="NCBI Taxonomy" id="446465"/>
    <lineage>
        <taxon>Bacteria</taxon>
        <taxon>Bacillati</taxon>
        <taxon>Actinomycetota</taxon>
        <taxon>Actinomycetes</taxon>
        <taxon>Micrococcales</taxon>
        <taxon>Dermabacteraceae</taxon>
        <taxon>Brachybacterium</taxon>
    </lineage>
</organism>
<comment type="function">
    <text evidence="1">Catalyzes the covalent attachment of the prokaryotic ubiquitin-like protein modifier Pup to the proteasomal substrate proteins, thereby targeting them for proteasomal degradation. This tagging system is termed pupylation. The ligation reaction involves the side-chain carboxylate of the C-terminal glutamate of Pup and the side-chain amino group of a substrate lysine.</text>
</comment>
<comment type="catalytic activity">
    <reaction evidence="1">
        <text>ATP + [prokaryotic ubiquitin-like protein]-L-glutamate + [protein]-L-lysine = ADP + phosphate + N(6)-([prokaryotic ubiquitin-like protein]-gamma-L-glutamyl)-[protein]-L-lysine.</text>
        <dbReference type="EC" id="6.3.1.19"/>
    </reaction>
</comment>
<comment type="pathway">
    <text evidence="1">Protein degradation; proteasomal Pup-dependent pathway.</text>
</comment>
<comment type="pathway">
    <text evidence="1">Protein modification; protein pupylation.</text>
</comment>
<comment type="miscellaneous">
    <text evidence="1">The reaction mechanism probably proceeds via the activation of Pup by phosphorylation of its C-terminal glutamate, which is then subject to nucleophilic attack by the substrate lysine, resulting in an isopeptide bond and the release of phosphate as a good leaving group.</text>
</comment>
<comment type="similarity">
    <text evidence="1">Belongs to the Pup ligase/Pup deamidase family. Pup-conjugating enzyme subfamily.</text>
</comment>
<evidence type="ECO:0000255" key="1">
    <source>
        <dbReference type="HAMAP-Rule" id="MF_02111"/>
    </source>
</evidence>
<accession>C7MCY7</accession>
<sequence>MKRRVGGLETEYGLVCVRADGSRALEPEAAARELFRPVVAMGRSSNVFLRNAARLYLDVGSHPEYATAECDDWWELVAQDRAGDRMFAELAAEATERLAADGQDARIHLLKNNVDSAGNAFGSHENYLVDRRGEFTRLPRYLLPFLVTRQIVTGAGGVVRPAPADGAPEQEAGPAQFVFSRRSDHMWEAVSSATTRTRPIINTRDEPHGDPTRFRRLHVIVGDSTMSEVSTHLRFATTDLVLRAIESGRALPELALHDDIAAIRAVARDLTGTTAIPTADGGTTTAIEVQQRWLDHVTEFADESEQDVLETWQRGIDAVRTGDRSWAATHLDWAIKERLFHQVAERRGVDLGDPAIERLDLAYHDIDPTQSVFAALQRRGLAPQVLDEQRIERARTTAPTTTRAHLRGQVVTAAQEHGVDHVVDWTTLRLTRPGAMPVQVLDPFATELPAVDALLEEIRASAAGAPESPPPFA</sequence>
<name>PAFA_BRAFD</name>
<feature type="chain" id="PRO_0000395903" description="Pup--protein ligase">
    <location>
        <begin position="1"/>
        <end position="473"/>
    </location>
</feature>
<feature type="active site" description="Proton acceptor" evidence="1">
    <location>
        <position position="58"/>
    </location>
</feature>
<feature type="binding site" evidence="1">
    <location>
        <position position="9"/>
    </location>
    <ligand>
        <name>Mg(2+)</name>
        <dbReference type="ChEBI" id="CHEBI:18420"/>
    </ligand>
</feature>
<feature type="binding site" evidence="1">
    <location>
        <position position="54"/>
    </location>
    <ligand>
        <name>ATP</name>
        <dbReference type="ChEBI" id="CHEBI:30616"/>
    </ligand>
</feature>
<feature type="binding site" evidence="1">
    <location>
        <position position="56"/>
    </location>
    <ligand>
        <name>Mg(2+)</name>
        <dbReference type="ChEBI" id="CHEBI:18420"/>
    </ligand>
</feature>
<feature type="binding site" evidence="1">
    <location>
        <position position="64"/>
    </location>
    <ligand>
        <name>Mg(2+)</name>
        <dbReference type="ChEBI" id="CHEBI:18420"/>
    </ligand>
</feature>
<feature type="binding site" evidence="1">
    <location>
        <position position="67"/>
    </location>
    <ligand>
        <name>ATP</name>
        <dbReference type="ChEBI" id="CHEBI:30616"/>
    </ligand>
</feature>
<feature type="binding site" evidence="1">
    <location>
        <position position="425"/>
    </location>
    <ligand>
        <name>ATP</name>
        <dbReference type="ChEBI" id="CHEBI:30616"/>
    </ligand>
</feature>
<dbReference type="EC" id="6.3.1.19" evidence="1"/>
<dbReference type="EMBL" id="CP001643">
    <property type="protein sequence ID" value="ACU85444.1"/>
    <property type="molecule type" value="Genomic_DNA"/>
</dbReference>
<dbReference type="RefSeq" id="YP_003155034.1">
    <property type="nucleotide sequence ID" value="NC_013172.1"/>
</dbReference>
<dbReference type="SMR" id="C7MCY7"/>
<dbReference type="STRING" id="446465.Bfae_16170"/>
<dbReference type="MEROPS" id="U72.001"/>
<dbReference type="KEGG" id="bfa:Bfae_16170"/>
<dbReference type="PATRIC" id="fig|446465.5.peg.1610"/>
<dbReference type="eggNOG" id="COG0638">
    <property type="taxonomic scope" value="Bacteria"/>
</dbReference>
<dbReference type="HOGENOM" id="CLU_040524_0_1_11"/>
<dbReference type="OrthoDB" id="9760627at2"/>
<dbReference type="UniPathway" id="UPA00997"/>
<dbReference type="UniPathway" id="UPA00998"/>
<dbReference type="Proteomes" id="UP000001919">
    <property type="component" value="Chromosome"/>
</dbReference>
<dbReference type="GO" id="GO:0005524">
    <property type="term" value="F:ATP binding"/>
    <property type="evidence" value="ECO:0007669"/>
    <property type="project" value="UniProtKB-UniRule"/>
</dbReference>
<dbReference type="GO" id="GO:0016879">
    <property type="term" value="F:ligase activity, forming carbon-nitrogen bonds"/>
    <property type="evidence" value="ECO:0007669"/>
    <property type="project" value="InterPro"/>
</dbReference>
<dbReference type="GO" id="GO:0000287">
    <property type="term" value="F:magnesium ion binding"/>
    <property type="evidence" value="ECO:0007669"/>
    <property type="project" value="UniProtKB-UniRule"/>
</dbReference>
<dbReference type="GO" id="GO:0019787">
    <property type="term" value="F:ubiquitin-like protein transferase activity"/>
    <property type="evidence" value="ECO:0007669"/>
    <property type="project" value="UniProtKB-UniRule"/>
</dbReference>
<dbReference type="GO" id="GO:0019941">
    <property type="term" value="P:modification-dependent protein catabolic process"/>
    <property type="evidence" value="ECO:0007669"/>
    <property type="project" value="UniProtKB-UniRule"/>
</dbReference>
<dbReference type="GO" id="GO:0010498">
    <property type="term" value="P:proteasomal protein catabolic process"/>
    <property type="evidence" value="ECO:0007669"/>
    <property type="project" value="UniProtKB-UniRule"/>
</dbReference>
<dbReference type="GO" id="GO:0070490">
    <property type="term" value="P:protein pupylation"/>
    <property type="evidence" value="ECO:0007669"/>
    <property type="project" value="UniProtKB-UniRule"/>
</dbReference>
<dbReference type="HAMAP" id="MF_02111">
    <property type="entry name" value="Pup_ligase"/>
    <property type="match status" value="1"/>
</dbReference>
<dbReference type="InterPro" id="IPR022279">
    <property type="entry name" value="Pup_ligase"/>
</dbReference>
<dbReference type="InterPro" id="IPR004347">
    <property type="entry name" value="Pup_ligase/deamidase"/>
</dbReference>
<dbReference type="NCBIfam" id="TIGR03686">
    <property type="entry name" value="pupylate_PafA"/>
    <property type="match status" value="1"/>
</dbReference>
<dbReference type="PANTHER" id="PTHR42307">
    <property type="entry name" value="PUP DEAMIDASE/DEPUPYLASE"/>
    <property type="match status" value="1"/>
</dbReference>
<dbReference type="PANTHER" id="PTHR42307:SF3">
    <property type="entry name" value="PUP--PROTEIN LIGASE"/>
    <property type="match status" value="1"/>
</dbReference>
<dbReference type="Pfam" id="PF03136">
    <property type="entry name" value="Pup_ligase"/>
    <property type="match status" value="1"/>
</dbReference>
<protein>
    <recommendedName>
        <fullName evidence="1">Pup--protein ligase</fullName>
        <ecNumber evidence="1">6.3.1.19</ecNumber>
    </recommendedName>
    <alternativeName>
        <fullName evidence="1">Proteasome accessory factor A</fullName>
    </alternativeName>
    <alternativeName>
        <fullName evidence="1">Pup-conjugating enzyme</fullName>
    </alternativeName>
</protein>
<reference key="1">
    <citation type="journal article" date="2009" name="Stand. Genomic Sci.">
        <title>Complete genome sequence of Brachybacterium faecium type strain (Schefferle 6-10).</title>
        <authorList>
            <person name="Lapidus A."/>
            <person name="Pukall R."/>
            <person name="Labuttii K."/>
            <person name="Copeland A."/>
            <person name="Del Rio T.G."/>
            <person name="Nolan M."/>
            <person name="Chen F."/>
            <person name="Lucas S."/>
            <person name="Tice H."/>
            <person name="Cheng J.F."/>
            <person name="Bruce D."/>
            <person name="Goodwin L."/>
            <person name="Pitluck S."/>
            <person name="Rohde M."/>
            <person name="Goker M."/>
            <person name="Pati A."/>
            <person name="Ivanova N."/>
            <person name="Mavrommatis K."/>
            <person name="Chen A."/>
            <person name="Palaniappan K."/>
            <person name="D'haeseleer P."/>
            <person name="Chain P."/>
            <person name="Bristow J."/>
            <person name="Eisen J.A."/>
            <person name="Markowitz V."/>
            <person name="Hugenholtz P."/>
            <person name="Kyrpides N.C."/>
            <person name="Klenk H.P."/>
        </authorList>
    </citation>
    <scope>NUCLEOTIDE SEQUENCE [LARGE SCALE GENOMIC DNA]</scope>
    <source>
        <strain>ATCC 43885 / DSM 4810 / JCM 11609 / LMG 19847 / NBRC 14762 / NCIMB 9860 / 6-10</strain>
    </source>
</reference>
<keyword id="KW-0067">ATP-binding</keyword>
<keyword id="KW-0436">Ligase</keyword>
<keyword id="KW-0460">Magnesium</keyword>
<keyword id="KW-0479">Metal-binding</keyword>
<keyword id="KW-0547">Nucleotide-binding</keyword>
<keyword id="KW-1185">Reference proteome</keyword>
<keyword id="KW-0833">Ubl conjugation pathway</keyword>
<proteinExistence type="inferred from homology"/>